<sequence length="88" mass="9891">MATKIRLARAGAKKKPFYQIIVADVRSRRDGRFIENVGTYDPNQNPAAVKFEEAKTLEWLGKGAQPTDTVKQILKKAGIWEKFVAKSV</sequence>
<accession>P62230</accession>
<gene>
    <name evidence="1" type="primary">rpsP</name>
    <name type="ordered locus">GSU0643</name>
</gene>
<proteinExistence type="inferred from homology"/>
<protein>
    <recommendedName>
        <fullName evidence="1">Small ribosomal subunit protein bS16</fullName>
    </recommendedName>
    <alternativeName>
        <fullName evidence="2">30S ribosomal protein S16</fullName>
    </alternativeName>
</protein>
<feature type="chain" id="PRO_0000167189" description="Small ribosomal subunit protein bS16">
    <location>
        <begin position="1"/>
        <end position="88"/>
    </location>
</feature>
<keyword id="KW-1185">Reference proteome</keyword>
<keyword id="KW-0687">Ribonucleoprotein</keyword>
<keyword id="KW-0689">Ribosomal protein</keyword>
<reference key="1">
    <citation type="journal article" date="2003" name="Science">
        <title>Genome of Geobacter sulfurreducens: metal reduction in subsurface environments.</title>
        <authorList>
            <person name="Methe B.A."/>
            <person name="Nelson K.E."/>
            <person name="Eisen J.A."/>
            <person name="Paulsen I.T."/>
            <person name="Nelson W.C."/>
            <person name="Heidelberg J.F."/>
            <person name="Wu D."/>
            <person name="Wu M."/>
            <person name="Ward N.L."/>
            <person name="Beanan M.J."/>
            <person name="Dodson R.J."/>
            <person name="Madupu R."/>
            <person name="Brinkac L.M."/>
            <person name="Daugherty S.C."/>
            <person name="DeBoy R.T."/>
            <person name="Durkin A.S."/>
            <person name="Gwinn M.L."/>
            <person name="Kolonay J.F."/>
            <person name="Sullivan S.A."/>
            <person name="Haft D.H."/>
            <person name="Selengut J."/>
            <person name="Davidsen T.M."/>
            <person name="Zafar N."/>
            <person name="White O."/>
            <person name="Tran B."/>
            <person name="Romero C."/>
            <person name="Forberger H.A."/>
            <person name="Weidman J.F."/>
            <person name="Khouri H.M."/>
            <person name="Feldblyum T.V."/>
            <person name="Utterback T.R."/>
            <person name="Van Aken S.E."/>
            <person name="Lovley D.R."/>
            <person name="Fraser C.M."/>
        </authorList>
    </citation>
    <scope>NUCLEOTIDE SEQUENCE [LARGE SCALE GENOMIC DNA]</scope>
    <source>
        <strain>ATCC 51573 / DSM 12127 / PCA</strain>
    </source>
</reference>
<dbReference type="EMBL" id="AE017180">
    <property type="protein sequence ID" value="AAR33973.2"/>
    <property type="molecule type" value="Genomic_DNA"/>
</dbReference>
<dbReference type="RefSeq" id="NP_951700.2">
    <property type="nucleotide sequence ID" value="NC_002939.5"/>
</dbReference>
<dbReference type="SMR" id="P62230"/>
<dbReference type="FunCoup" id="P62230">
    <property type="interactions" value="598"/>
</dbReference>
<dbReference type="STRING" id="243231.GSU0643"/>
<dbReference type="EnsemblBacteria" id="AAR33973">
    <property type="protein sequence ID" value="AAR33973"/>
    <property type="gene ID" value="GSU0643"/>
</dbReference>
<dbReference type="KEGG" id="gsu:GSU0643"/>
<dbReference type="PATRIC" id="fig|243231.5.peg.639"/>
<dbReference type="eggNOG" id="COG0228">
    <property type="taxonomic scope" value="Bacteria"/>
</dbReference>
<dbReference type="HOGENOM" id="CLU_3440848_0_0_7"/>
<dbReference type="InParanoid" id="P62230"/>
<dbReference type="OrthoDB" id="9807878at2"/>
<dbReference type="Proteomes" id="UP000000577">
    <property type="component" value="Chromosome"/>
</dbReference>
<dbReference type="GO" id="GO:0005737">
    <property type="term" value="C:cytoplasm"/>
    <property type="evidence" value="ECO:0007669"/>
    <property type="project" value="UniProtKB-ARBA"/>
</dbReference>
<dbReference type="GO" id="GO:0015935">
    <property type="term" value="C:small ribosomal subunit"/>
    <property type="evidence" value="ECO:0000318"/>
    <property type="project" value="GO_Central"/>
</dbReference>
<dbReference type="GO" id="GO:0003735">
    <property type="term" value="F:structural constituent of ribosome"/>
    <property type="evidence" value="ECO:0000318"/>
    <property type="project" value="GO_Central"/>
</dbReference>
<dbReference type="GO" id="GO:0006412">
    <property type="term" value="P:translation"/>
    <property type="evidence" value="ECO:0007669"/>
    <property type="project" value="UniProtKB-UniRule"/>
</dbReference>
<dbReference type="FunFam" id="3.30.1320.10:FF:000002">
    <property type="entry name" value="30S ribosomal protein S16"/>
    <property type="match status" value="1"/>
</dbReference>
<dbReference type="Gene3D" id="3.30.1320.10">
    <property type="match status" value="1"/>
</dbReference>
<dbReference type="HAMAP" id="MF_00385">
    <property type="entry name" value="Ribosomal_bS16"/>
    <property type="match status" value="1"/>
</dbReference>
<dbReference type="InterPro" id="IPR000307">
    <property type="entry name" value="Ribosomal_bS16"/>
</dbReference>
<dbReference type="InterPro" id="IPR020592">
    <property type="entry name" value="Ribosomal_bS16_CS"/>
</dbReference>
<dbReference type="InterPro" id="IPR023803">
    <property type="entry name" value="Ribosomal_bS16_dom_sf"/>
</dbReference>
<dbReference type="NCBIfam" id="TIGR00002">
    <property type="entry name" value="S16"/>
    <property type="match status" value="1"/>
</dbReference>
<dbReference type="PANTHER" id="PTHR12919">
    <property type="entry name" value="30S RIBOSOMAL PROTEIN S16"/>
    <property type="match status" value="1"/>
</dbReference>
<dbReference type="PANTHER" id="PTHR12919:SF20">
    <property type="entry name" value="SMALL RIBOSOMAL SUBUNIT PROTEIN BS16M"/>
    <property type="match status" value="1"/>
</dbReference>
<dbReference type="Pfam" id="PF00886">
    <property type="entry name" value="Ribosomal_S16"/>
    <property type="match status" value="1"/>
</dbReference>
<dbReference type="SUPFAM" id="SSF54565">
    <property type="entry name" value="Ribosomal protein S16"/>
    <property type="match status" value="1"/>
</dbReference>
<dbReference type="PROSITE" id="PS00732">
    <property type="entry name" value="RIBOSOMAL_S16"/>
    <property type="match status" value="1"/>
</dbReference>
<name>RS16_GEOSL</name>
<evidence type="ECO:0000255" key="1">
    <source>
        <dbReference type="HAMAP-Rule" id="MF_00385"/>
    </source>
</evidence>
<evidence type="ECO:0000305" key="2"/>
<organism>
    <name type="scientific">Geobacter sulfurreducens (strain ATCC 51573 / DSM 12127 / PCA)</name>
    <dbReference type="NCBI Taxonomy" id="243231"/>
    <lineage>
        <taxon>Bacteria</taxon>
        <taxon>Pseudomonadati</taxon>
        <taxon>Thermodesulfobacteriota</taxon>
        <taxon>Desulfuromonadia</taxon>
        <taxon>Geobacterales</taxon>
        <taxon>Geobacteraceae</taxon>
        <taxon>Geobacter</taxon>
    </lineage>
</organism>
<comment type="similarity">
    <text evidence="1">Belongs to the bacterial ribosomal protein bS16 family.</text>
</comment>